<accession>Q8PUQ4</accession>
<evidence type="ECO:0000255" key="1">
    <source>
        <dbReference type="HAMAP-Rule" id="MF_00563"/>
    </source>
</evidence>
<proteinExistence type="inferred from homology"/>
<sequence>MTEKELIESGNMKMEWARNHMPVLAIIREKFEKEKPLKGLKVGMALHVEAKTAVLVETLAAGGAQVAISGCNPLSTQDDVAAALDTRENINCFAKYGCCTGEYYEAIDRVLDIEPDITIDDGADLIFKLHKERQEMLAKILGGCEETTTGVHRLHAMEKDGALKMPVIAVNDAMTKYLFDNRYGTGQSAWDGINRTTNLLVAGKNVVVAGYGWCGRGVAMRATGLGASVIVTEIDPIRALEARMDGHRVMKMSEAAKIGDLFVTATGNRDILTADNFKVMKDGAILANSGHFNVEIDMEALDSLAKSTRTVRHNIKEYDIGNRRINVIAEGRLVNLAAGDGHPAEVMDMSFANQALCVRYIAENKLSSGVHGVPRELDTYVAKLKLESMGIATDELTSKQECYMSGWECGT</sequence>
<keyword id="KW-0963">Cytoplasm</keyword>
<keyword id="KW-0378">Hydrolase</keyword>
<keyword id="KW-0520">NAD</keyword>
<keyword id="KW-0554">One-carbon metabolism</keyword>
<feature type="chain" id="PRO_0000117006" description="S-inosyl-L-homocysteine hydrolase">
    <location>
        <begin position="1"/>
        <end position="411"/>
    </location>
</feature>
<feature type="binding site" evidence="1">
    <location>
        <position position="121"/>
    </location>
    <ligand>
        <name>substrate</name>
    </ligand>
</feature>
<feature type="binding site" evidence="1">
    <location>
        <position position="146"/>
    </location>
    <ligand>
        <name>substrate</name>
    </ligand>
</feature>
<feature type="binding site" evidence="1">
    <location>
        <begin position="147"/>
        <end position="149"/>
    </location>
    <ligand>
        <name>NAD(+)</name>
        <dbReference type="ChEBI" id="CHEBI:57540"/>
    </ligand>
</feature>
<feature type="binding site" evidence="1">
    <location>
        <position position="176"/>
    </location>
    <ligand>
        <name>substrate</name>
    </ligand>
</feature>
<feature type="binding site" evidence="1">
    <location>
        <position position="180"/>
    </location>
    <ligand>
        <name>substrate</name>
    </ligand>
</feature>
<feature type="binding site" evidence="1">
    <location>
        <position position="181"/>
    </location>
    <ligand>
        <name>NAD(+)</name>
        <dbReference type="ChEBI" id="CHEBI:57540"/>
    </ligand>
</feature>
<feature type="binding site" evidence="1">
    <location>
        <begin position="210"/>
        <end position="215"/>
    </location>
    <ligand>
        <name>NAD(+)</name>
        <dbReference type="ChEBI" id="CHEBI:57540"/>
    </ligand>
</feature>
<feature type="binding site" evidence="1">
    <location>
        <position position="233"/>
    </location>
    <ligand>
        <name>NAD(+)</name>
        <dbReference type="ChEBI" id="CHEBI:57540"/>
    </ligand>
</feature>
<feature type="binding site" evidence="1">
    <location>
        <position position="268"/>
    </location>
    <ligand>
        <name>NAD(+)</name>
        <dbReference type="ChEBI" id="CHEBI:57540"/>
    </ligand>
</feature>
<feature type="binding site" evidence="1">
    <location>
        <begin position="289"/>
        <end position="291"/>
    </location>
    <ligand>
        <name>NAD(+)</name>
        <dbReference type="ChEBI" id="CHEBI:57540"/>
    </ligand>
</feature>
<feature type="binding site" evidence="1">
    <location>
        <position position="335"/>
    </location>
    <ligand>
        <name>NAD(+)</name>
        <dbReference type="ChEBI" id="CHEBI:57540"/>
    </ligand>
</feature>
<protein>
    <recommendedName>
        <fullName evidence="1">S-inosyl-L-homocysteine hydrolase</fullName>
        <shortName evidence="1">SIHH</shortName>
        <ecNumber evidence="1">3.13.1.9</ecNumber>
    </recommendedName>
</protein>
<name>SIHH_METMA</name>
<reference key="1">
    <citation type="journal article" date="2002" name="J. Mol. Microbiol. Biotechnol.">
        <title>The genome of Methanosarcina mazei: evidence for lateral gene transfer between Bacteria and Archaea.</title>
        <authorList>
            <person name="Deppenmeier U."/>
            <person name="Johann A."/>
            <person name="Hartsch T."/>
            <person name="Merkl R."/>
            <person name="Schmitz R.A."/>
            <person name="Martinez-Arias R."/>
            <person name="Henne A."/>
            <person name="Wiezer A."/>
            <person name="Baeumer S."/>
            <person name="Jacobi C."/>
            <person name="Brueggemann H."/>
            <person name="Lienard T."/>
            <person name="Christmann A."/>
            <person name="Boemecke M."/>
            <person name="Steckel S."/>
            <person name="Bhattacharyya A."/>
            <person name="Lykidis A."/>
            <person name="Overbeek R."/>
            <person name="Klenk H.-P."/>
            <person name="Gunsalus R.P."/>
            <person name="Fritz H.-J."/>
            <person name="Gottschalk G."/>
        </authorList>
    </citation>
    <scope>NUCLEOTIDE SEQUENCE [LARGE SCALE GENOMIC DNA]</scope>
    <source>
        <strain>ATCC BAA-159 / DSM 3647 / Goe1 / Go1 / JCM 11833 / OCM 88</strain>
    </source>
</reference>
<organism>
    <name type="scientific">Methanosarcina mazei (strain ATCC BAA-159 / DSM 3647 / Goe1 / Go1 / JCM 11833 / OCM 88)</name>
    <name type="common">Methanosarcina frisia</name>
    <dbReference type="NCBI Taxonomy" id="192952"/>
    <lineage>
        <taxon>Archaea</taxon>
        <taxon>Methanobacteriati</taxon>
        <taxon>Methanobacteriota</taxon>
        <taxon>Stenosarchaea group</taxon>
        <taxon>Methanomicrobia</taxon>
        <taxon>Methanosarcinales</taxon>
        <taxon>Methanosarcinaceae</taxon>
        <taxon>Methanosarcina</taxon>
    </lineage>
</organism>
<comment type="function">
    <text evidence="1">Catalyzes the hydrolysis of S-inosyl-L-homocysteine (SIH) to L-homocysteine (Hcy) and inosine. Likely functions in a S-adenosyl-L-methionine (SAM) recycling pathway from S-adenosyl-L-homocysteine (SAH) produced from SAM-dependent methylation reactions. Can also catalyze the reverse reaction in vitro, i.e. the synthesis of SIH from Hcy and inosine.</text>
</comment>
<comment type="catalytic activity">
    <reaction evidence="1">
        <text>S-inosyl-L-homocysteine + H2O = L-homocysteine + inosine</text>
        <dbReference type="Rhea" id="RHEA:59828"/>
        <dbReference type="ChEBI" id="CHEBI:15377"/>
        <dbReference type="ChEBI" id="CHEBI:17596"/>
        <dbReference type="ChEBI" id="CHEBI:57985"/>
        <dbReference type="ChEBI" id="CHEBI:58199"/>
        <dbReference type="EC" id="3.13.1.9"/>
    </reaction>
    <physiologicalReaction direction="left-to-right" evidence="1">
        <dbReference type="Rhea" id="RHEA:59829"/>
    </physiologicalReaction>
</comment>
<comment type="cofactor">
    <cofactor evidence="1">
        <name>NAD(+)</name>
        <dbReference type="ChEBI" id="CHEBI:57540"/>
    </cofactor>
    <text evidence="1">Binds 1 NAD(+) per subunit.</text>
</comment>
<comment type="pathway">
    <text evidence="1">Amino-acid biosynthesis; S-adenosyl-L-methionine biosynthesis.</text>
</comment>
<comment type="subcellular location">
    <subcellularLocation>
        <location evidence="1">Cytoplasm</location>
    </subcellularLocation>
</comment>
<comment type="miscellaneous">
    <text evidence="1">SAH is a product of SAM methyltransferases and is known to be a feedback inhibitor of these enzymes. As a result of this inhibition, organisms have evolved efficient enzymes to metabolize SAH via different pathways. The pathway found in methanogens differs from the canonical pathway, it uses the deamination of S-adenosyl-L-homocysteine to form S-inosyl-L-homocysteine for the regeneration of SAM from S-adenosyl-L-homocysteine.</text>
</comment>
<comment type="similarity">
    <text evidence="1">Belongs to the adenosylhomocysteinase family.</text>
</comment>
<dbReference type="EC" id="3.13.1.9" evidence="1"/>
<dbReference type="EMBL" id="AE008384">
    <property type="protein sequence ID" value="AAM31974.1"/>
    <property type="molecule type" value="Genomic_DNA"/>
</dbReference>
<dbReference type="RefSeq" id="WP_011034205.1">
    <property type="nucleotide sequence ID" value="NC_003901.1"/>
</dbReference>
<dbReference type="SMR" id="Q8PUQ4"/>
<dbReference type="GeneID" id="1480620"/>
<dbReference type="KEGG" id="mma:MM_2278"/>
<dbReference type="PATRIC" id="fig|192952.21.peg.2611"/>
<dbReference type="eggNOG" id="arCOG04137">
    <property type="taxonomic scope" value="Archaea"/>
</dbReference>
<dbReference type="HOGENOM" id="CLU_025194_0_2_2"/>
<dbReference type="UniPathway" id="UPA00315"/>
<dbReference type="Proteomes" id="UP000000595">
    <property type="component" value="Chromosome"/>
</dbReference>
<dbReference type="GO" id="GO:0005829">
    <property type="term" value="C:cytosol"/>
    <property type="evidence" value="ECO:0007669"/>
    <property type="project" value="TreeGrafter"/>
</dbReference>
<dbReference type="GO" id="GO:0004013">
    <property type="term" value="F:adenosylhomocysteinase activity"/>
    <property type="evidence" value="ECO:0007669"/>
    <property type="project" value="TreeGrafter"/>
</dbReference>
<dbReference type="GO" id="GO:0016802">
    <property type="term" value="F:trialkylsulfonium hydrolase activity"/>
    <property type="evidence" value="ECO:0007669"/>
    <property type="project" value="UniProtKB-UniRule"/>
</dbReference>
<dbReference type="GO" id="GO:0006730">
    <property type="term" value="P:one-carbon metabolic process"/>
    <property type="evidence" value="ECO:0007669"/>
    <property type="project" value="UniProtKB-KW"/>
</dbReference>
<dbReference type="GO" id="GO:0006556">
    <property type="term" value="P:S-adenosylmethionine biosynthetic process"/>
    <property type="evidence" value="ECO:0007669"/>
    <property type="project" value="UniProtKB-UniRule"/>
</dbReference>
<dbReference type="GO" id="GO:0033353">
    <property type="term" value="P:S-adenosylmethionine cycle"/>
    <property type="evidence" value="ECO:0007669"/>
    <property type="project" value="TreeGrafter"/>
</dbReference>
<dbReference type="CDD" id="cd00401">
    <property type="entry name" value="SAHH"/>
    <property type="match status" value="1"/>
</dbReference>
<dbReference type="FunFam" id="3.40.50.720:FF:000004">
    <property type="entry name" value="Adenosylhomocysteinase"/>
    <property type="match status" value="1"/>
</dbReference>
<dbReference type="Gene3D" id="3.40.50.1480">
    <property type="entry name" value="Adenosylhomocysteinase-like"/>
    <property type="match status" value="1"/>
</dbReference>
<dbReference type="Gene3D" id="3.40.50.720">
    <property type="entry name" value="NAD(P)-binding Rossmann-like Domain"/>
    <property type="match status" value="1"/>
</dbReference>
<dbReference type="HAMAP" id="MF_00563">
    <property type="entry name" value="AdoHcyase"/>
    <property type="match status" value="1"/>
</dbReference>
<dbReference type="InterPro" id="IPR042172">
    <property type="entry name" value="Adenosylhomocyst_ase-like_sf"/>
</dbReference>
<dbReference type="InterPro" id="IPR000043">
    <property type="entry name" value="Adenosylhomocysteinase-like"/>
</dbReference>
<dbReference type="InterPro" id="IPR015878">
    <property type="entry name" value="Ado_hCys_hydrolase_NAD-bd"/>
</dbReference>
<dbReference type="InterPro" id="IPR036291">
    <property type="entry name" value="NAD(P)-bd_dom_sf"/>
</dbReference>
<dbReference type="InterPro" id="IPR020082">
    <property type="entry name" value="S-Ado-L-homoCys_hydrolase_CS"/>
</dbReference>
<dbReference type="NCBIfam" id="TIGR00936">
    <property type="entry name" value="ahcY"/>
    <property type="match status" value="1"/>
</dbReference>
<dbReference type="NCBIfam" id="NF004005">
    <property type="entry name" value="PRK05476.2-3"/>
    <property type="match status" value="1"/>
</dbReference>
<dbReference type="PANTHER" id="PTHR23420">
    <property type="entry name" value="ADENOSYLHOMOCYSTEINASE"/>
    <property type="match status" value="1"/>
</dbReference>
<dbReference type="PANTHER" id="PTHR23420:SF0">
    <property type="entry name" value="ADENOSYLHOMOCYSTEINASE"/>
    <property type="match status" value="1"/>
</dbReference>
<dbReference type="Pfam" id="PF05221">
    <property type="entry name" value="AdoHcyase"/>
    <property type="match status" value="2"/>
</dbReference>
<dbReference type="Pfam" id="PF00670">
    <property type="entry name" value="AdoHcyase_NAD"/>
    <property type="match status" value="1"/>
</dbReference>
<dbReference type="PIRSF" id="PIRSF001109">
    <property type="entry name" value="Ad_hcy_hydrolase"/>
    <property type="match status" value="1"/>
</dbReference>
<dbReference type="SMART" id="SM00996">
    <property type="entry name" value="AdoHcyase"/>
    <property type="match status" value="1"/>
</dbReference>
<dbReference type="SMART" id="SM00997">
    <property type="entry name" value="AdoHcyase_NAD"/>
    <property type="match status" value="1"/>
</dbReference>
<dbReference type="SUPFAM" id="SSF52283">
    <property type="entry name" value="Formate/glycerate dehydrogenase catalytic domain-like"/>
    <property type="match status" value="1"/>
</dbReference>
<dbReference type="SUPFAM" id="SSF51735">
    <property type="entry name" value="NAD(P)-binding Rossmann-fold domains"/>
    <property type="match status" value="1"/>
</dbReference>
<dbReference type="PROSITE" id="PS00738">
    <property type="entry name" value="ADOHCYASE_1"/>
    <property type="match status" value="1"/>
</dbReference>
<dbReference type="PROSITE" id="PS00739">
    <property type="entry name" value="ADOHCYASE_2"/>
    <property type="match status" value="1"/>
</dbReference>
<gene>
    <name type="ordered locus">MM_2278</name>
</gene>